<accession>P43082</accession>
<gene>
    <name type="primary">HEL</name>
    <name type="ordered locus">At3g04720</name>
    <name type="ORF">F7O18.21</name>
</gene>
<organism>
    <name type="scientific">Arabidopsis thaliana</name>
    <name type="common">Mouse-ear cress</name>
    <dbReference type="NCBI Taxonomy" id="3702"/>
    <lineage>
        <taxon>Eukaryota</taxon>
        <taxon>Viridiplantae</taxon>
        <taxon>Streptophyta</taxon>
        <taxon>Embryophyta</taxon>
        <taxon>Tracheophyta</taxon>
        <taxon>Spermatophyta</taxon>
        <taxon>Magnoliopsida</taxon>
        <taxon>eudicotyledons</taxon>
        <taxon>Gunneridae</taxon>
        <taxon>Pentapetalae</taxon>
        <taxon>rosids</taxon>
        <taxon>malvids</taxon>
        <taxon>Brassicales</taxon>
        <taxon>Brassicaceae</taxon>
        <taxon>Camelineae</taxon>
        <taxon>Arabidopsis</taxon>
    </lineage>
</organism>
<protein>
    <recommendedName>
        <fullName>Hevein-like preproprotein</fullName>
    </recommendedName>
    <component>
        <recommendedName>
            <fullName>CB-HEL</fullName>
        </recommendedName>
    </component>
    <component>
        <recommendedName>
            <fullName>CD-HEL</fullName>
            <ecNumber>3.1.-.-</ecNumber>
        </recommendedName>
        <alternativeName>
            <fullName>RNase</fullName>
        </alternativeName>
    </component>
</protein>
<reference key="1">
    <citation type="journal article" date="1993" name="Mol. Plant Microbe Interact.">
        <title>Regulation of a hevein-like gene in Arabidopsis.</title>
        <authorList>
            <person name="Potter S."/>
            <person name="Uknes S."/>
            <person name="Lawton K."/>
            <person name="Winter A.M."/>
            <person name="Chandler D."/>
            <person name="Dimaio J."/>
            <person name="Novitzky R."/>
            <person name="Ward E."/>
            <person name="Ryals J."/>
        </authorList>
    </citation>
    <scope>NUCLEOTIDE SEQUENCE [MRNA]</scope>
    <scope>INDUCTION</scope>
</reference>
<reference key="2">
    <citation type="journal article" date="2000" name="Nature">
        <title>Sequence and analysis of chromosome 3 of the plant Arabidopsis thaliana.</title>
        <authorList>
            <person name="Salanoubat M."/>
            <person name="Lemcke K."/>
            <person name="Rieger M."/>
            <person name="Ansorge W."/>
            <person name="Unseld M."/>
            <person name="Fartmann B."/>
            <person name="Valle G."/>
            <person name="Bloecker H."/>
            <person name="Perez-Alonso M."/>
            <person name="Obermaier B."/>
            <person name="Delseny M."/>
            <person name="Boutry M."/>
            <person name="Grivell L.A."/>
            <person name="Mache R."/>
            <person name="Puigdomenech P."/>
            <person name="De Simone V."/>
            <person name="Choisne N."/>
            <person name="Artiguenave F."/>
            <person name="Robert C."/>
            <person name="Brottier P."/>
            <person name="Wincker P."/>
            <person name="Cattolico L."/>
            <person name="Weissenbach J."/>
            <person name="Saurin W."/>
            <person name="Quetier F."/>
            <person name="Schaefer M."/>
            <person name="Mueller-Auer S."/>
            <person name="Gabel C."/>
            <person name="Fuchs M."/>
            <person name="Benes V."/>
            <person name="Wurmbach E."/>
            <person name="Drzonek H."/>
            <person name="Erfle H."/>
            <person name="Jordan N."/>
            <person name="Bangert S."/>
            <person name="Wiedelmann R."/>
            <person name="Kranz H."/>
            <person name="Voss H."/>
            <person name="Holland R."/>
            <person name="Brandt P."/>
            <person name="Nyakatura G."/>
            <person name="Vezzi A."/>
            <person name="D'Angelo M."/>
            <person name="Pallavicini A."/>
            <person name="Toppo S."/>
            <person name="Simionati B."/>
            <person name="Conrad A."/>
            <person name="Hornischer K."/>
            <person name="Kauer G."/>
            <person name="Loehnert T.-H."/>
            <person name="Nordsiek G."/>
            <person name="Reichelt J."/>
            <person name="Scharfe M."/>
            <person name="Schoen O."/>
            <person name="Bargues M."/>
            <person name="Terol J."/>
            <person name="Climent J."/>
            <person name="Navarro P."/>
            <person name="Collado C."/>
            <person name="Perez-Perez A."/>
            <person name="Ottenwaelder B."/>
            <person name="Duchemin D."/>
            <person name="Cooke R."/>
            <person name="Laudie M."/>
            <person name="Berger-Llauro C."/>
            <person name="Purnelle B."/>
            <person name="Masuy D."/>
            <person name="de Haan M."/>
            <person name="Maarse A.C."/>
            <person name="Alcaraz J.-P."/>
            <person name="Cottet A."/>
            <person name="Casacuberta E."/>
            <person name="Monfort A."/>
            <person name="Argiriou A."/>
            <person name="Flores M."/>
            <person name="Liguori R."/>
            <person name="Vitale D."/>
            <person name="Mannhaupt G."/>
            <person name="Haase D."/>
            <person name="Schoof H."/>
            <person name="Rudd S."/>
            <person name="Zaccaria P."/>
            <person name="Mewes H.-W."/>
            <person name="Mayer K.F.X."/>
            <person name="Kaul S."/>
            <person name="Town C.D."/>
            <person name="Koo H.L."/>
            <person name="Tallon L.J."/>
            <person name="Jenkins J."/>
            <person name="Rooney T."/>
            <person name="Rizzo M."/>
            <person name="Walts A."/>
            <person name="Utterback T."/>
            <person name="Fujii C.Y."/>
            <person name="Shea T.P."/>
            <person name="Creasy T.H."/>
            <person name="Haas B."/>
            <person name="Maiti R."/>
            <person name="Wu D."/>
            <person name="Peterson J."/>
            <person name="Van Aken S."/>
            <person name="Pai G."/>
            <person name="Militscher J."/>
            <person name="Sellers P."/>
            <person name="Gill J.E."/>
            <person name="Feldblyum T.V."/>
            <person name="Preuss D."/>
            <person name="Lin X."/>
            <person name="Nierman W.C."/>
            <person name="Salzberg S.L."/>
            <person name="White O."/>
            <person name="Venter J.C."/>
            <person name="Fraser C.M."/>
            <person name="Kaneko T."/>
            <person name="Nakamura Y."/>
            <person name="Sato S."/>
            <person name="Kato T."/>
            <person name="Asamizu E."/>
            <person name="Sasamoto S."/>
            <person name="Kimura T."/>
            <person name="Idesawa K."/>
            <person name="Kawashima K."/>
            <person name="Kishida Y."/>
            <person name="Kiyokawa C."/>
            <person name="Kohara M."/>
            <person name="Matsumoto M."/>
            <person name="Matsuno A."/>
            <person name="Muraki A."/>
            <person name="Nakayama S."/>
            <person name="Nakazaki N."/>
            <person name="Shinpo S."/>
            <person name="Takeuchi C."/>
            <person name="Wada T."/>
            <person name="Watanabe A."/>
            <person name="Yamada M."/>
            <person name="Yasuda M."/>
            <person name="Tabata S."/>
        </authorList>
    </citation>
    <scope>NUCLEOTIDE SEQUENCE [LARGE SCALE GENOMIC DNA]</scope>
    <source>
        <strain>cv. Columbia</strain>
    </source>
</reference>
<reference key="3">
    <citation type="journal article" date="2017" name="Plant J.">
        <title>Araport11: a complete reannotation of the Arabidopsis thaliana reference genome.</title>
        <authorList>
            <person name="Cheng C.Y."/>
            <person name="Krishnakumar V."/>
            <person name="Chan A.P."/>
            <person name="Thibaud-Nissen F."/>
            <person name="Schobel S."/>
            <person name="Town C.D."/>
        </authorList>
    </citation>
    <scope>GENOME REANNOTATION</scope>
    <source>
        <strain>cv. Columbia</strain>
    </source>
</reference>
<reference key="4">
    <citation type="journal article" date="2003" name="Science">
        <title>Empirical analysis of transcriptional activity in the Arabidopsis genome.</title>
        <authorList>
            <person name="Yamada K."/>
            <person name="Lim J."/>
            <person name="Dale J.M."/>
            <person name="Chen H."/>
            <person name="Shinn P."/>
            <person name="Palm C.J."/>
            <person name="Southwick A.M."/>
            <person name="Wu H.C."/>
            <person name="Kim C.J."/>
            <person name="Nguyen M."/>
            <person name="Pham P.K."/>
            <person name="Cheuk R.F."/>
            <person name="Karlin-Newmann G."/>
            <person name="Liu S.X."/>
            <person name="Lam B."/>
            <person name="Sakano H."/>
            <person name="Wu T."/>
            <person name="Yu G."/>
            <person name="Miranda M."/>
            <person name="Quach H.L."/>
            <person name="Tripp M."/>
            <person name="Chang C.H."/>
            <person name="Lee J.M."/>
            <person name="Toriumi M.J."/>
            <person name="Chan M.M."/>
            <person name="Tang C.C."/>
            <person name="Onodera C.S."/>
            <person name="Deng J.M."/>
            <person name="Akiyama K."/>
            <person name="Ansari Y."/>
            <person name="Arakawa T."/>
            <person name="Banh J."/>
            <person name="Banno F."/>
            <person name="Bowser L."/>
            <person name="Brooks S.Y."/>
            <person name="Carninci P."/>
            <person name="Chao Q."/>
            <person name="Choy N."/>
            <person name="Enju A."/>
            <person name="Goldsmith A.D."/>
            <person name="Gurjal M."/>
            <person name="Hansen N.F."/>
            <person name="Hayashizaki Y."/>
            <person name="Johnson-Hopson C."/>
            <person name="Hsuan V.W."/>
            <person name="Iida K."/>
            <person name="Karnes M."/>
            <person name="Khan S."/>
            <person name="Koesema E."/>
            <person name="Ishida J."/>
            <person name="Jiang P.X."/>
            <person name="Jones T."/>
            <person name="Kawai J."/>
            <person name="Kamiya A."/>
            <person name="Meyers C."/>
            <person name="Nakajima M."/>
            <person name="Narusaka M."/>
            <person name="Seki M."/>
            <person name="Sakurai T."/>
            <person name="Satou M."/>
            <person name="Tamse R."/>
            <person name="Vaysberg M."/>
            <person name="Wallender E.K."/>
            <person name="Wong C."/>
            <person name="Yamamura Y."/>
            <person name="Yuan S."/>
            <person name="Shinozaki K."/>
            <person name="Davis R.W."/>
            <person name="Theologis A."/>
            <person name="Ecker J.R."/>
        </authorList>
    </citation>
    <scope>NUCLEOTIDE SEQUENCE [LARGE SCALE MRNA]</scope>
    <source>
        <strain>cv. Columbia</strain>
    </source>
</reference>
<reference key="5">
    <citation type="submission" date="2002-03" db="EMBL/GenBank/DDBJ databases">
        <title>Full-length cDNA from Arabidopsis thaliana.</title>
        <authorList>
            <person name="Brover V.V."/>
            <person name="Troukhan M.E."/>
            <person name="Alexandrov N.A."/>
            <person name="Lu Y.-P."/>
            <person name="Flavell R.B."/>
            <person name="Feldmann K.A."/>
        </authorList>
    </citation>
    <scope>NUCLEOTIDE SEQUENCE [LARGE SCALE MRNA]</scope>
</reference>
<reference key="6">
    <citation type="journal article" date="2011" name="J. Exp. Bot.">
        <title>Cross activity of orthologous WRKY transcription factors in wheat and Arabidopsis.</title>
        <authorList>
            <person name="Proietti S."/>
            <person name="Bertini L."/>
            <person name="Van der Ent S."/>
            <person name="Leon-Reyes A."/>
            <person name="Pieterse C.M."/>
            <person name="Tucci M."/>
            <person name="Caporale C."/>
            <person name="Caruso C."/>
        </authorList>
    </citation>
    <scope>INDUCTION</scope>
</reference>
<reference key="7">
    <citation type="journal article" date="2012" name="Biol. Chem.">
        <title>Modular structure of HEL protein from Arabidopsis reveals new potential functions for PR-4 proteins.</title>
        <authorList>
            <person name="Bertini L."/>
            <person name="Proietti S."/>
            <person name="Aleandri M.P."/>
            <person name="Mondello F."/>
            <person name="Sandini S."/>
            <person name="Caporale C."/>
        </authorList>
    </citation>
    <scope>FUNCTION</scope>
    <scope>3D-STRUCTURE MODELING</scope>
    <scope>PROTEOLYTIC PROCESSING</scope>
    <scope>INTERACTION</scope>
    <scope>SUBCELLULAR LOCATION</scope>
    <scope>DOMAIN</scope>
    <scope>DISULFIDE BOND</scope>
</reference>
<sequence length="212" mass="22937">MKIRLSITIILLSYTVATVAGQQCGRQGGGRTCPGNICCSQYGYCGTTADYCSPTNNCQSNCWGSGPSGPGESASNVRATYHFYNPAQNNWDLRAVSAYCSTWDADKPYAWRSKYGWTAFCGPAGPRGQASCGKCLRVKNTRTNAAVTVRIVDQCSNGGLDLDVAMFNQIDTDGFGYQQGHLIVDYQFVDCGNELIGQPDSRNMLVSAIDRV</sequence>
<feature type="signal peptide" evidence="1">
    <location>
        <begin position="1"/>
        <end position="21"/>
    </location>
</feature>
<feature type="chain" id="PRO_0000005284" description="Hevein-like preproprotein">
    <location>
        <begin position="22"/>
        <end position="212"/>
    </location>
</feature>
<feature type="chain" id="PRO_0000421568" description="CB-HEL">
    <location>
        <begin position="22"/>
        <end status="unknown"/>
    </location>
</feature>
<feature type="chain" id="PRO_0000421569" description="CD-HEL">
    <location>
        <begin status="unknown"/>
        <end position="212"/>
    </location>
</feature>
<feature type="domain" description="Chitin-binding type-1" evidence="2">
    <location>
        <begin position="22"/>
        <end position="64"/>
    </location>
</feature>
<feature type="domain" description="Barwin" evidence="3">
    <location>
        <begin position="72"/>
        <end position="193"/>
    </location>
</feature>
<feature type="disulfide bond" evidence="7">
    <location>
        <begin position="24"/>
        <end position="39"/>
    </location>
</feature>
<feature type="disulfide bond" evidence="7">
    <location>
        <begin position="33"/>
        <end position="45"/>
    </location>
</feature>
<feature type="disulfide bond" evidence="7">
    <location>
        <begin position="38"/>
        <end position="52"/>
    </location>
</feature>
<feature type="disulfide bond" evidence="7">
    <location>
        <begin position="58"/>
        <end position="62"/>
    </location>
</feature>
<feature type="disulfide bond" evidence="2">
    <location>
        <begin position="100"/>
        <end position="132"/>
    </location>
</feature>
<feature type="disulfide bond" evidence="2">
    <location>
        <begin position="121"/>
        <end position="155"/>
    </location>
</feature>
<feature type="disulfide bond" evidence="2">
    <location>
        <begin position="135"/>
        <end position="191"/>
    </location>
</feature>
<name>HEVL_ARATH</name>
<dbReference type="EC" id="3.1.-.-"/>
<dbReference type="EMBL" id="U01880">
    <property type="protein sequence ID" value="AAA20642.1"/>
    <property type="molecule type" value="mRNA"/>
</dbReference>
<dbReference type="EMBL" id="AC011437">
    <property type="protein sequence ID" value="AAF04912.1"/>
    <property type="molecule type" value="Genomic_DNA"/>
</dbReference>
<dbReference type="EMBL" id="CP002686">
    <property type="protein sequence ID" value="AEE74125.1"/>
    <property type="molecule type" value="Genomic_DNA"/>
</dbReference>
<dbReference type="EMBL" id="AF370536">
    <property type="protein sequence ID" value="AAK48963.1"/>
    <property type="molecule type" value="mRNA"/>
</dbReference>
<dbReference type="EMBL" id="BT000046">
    <property type="protein sequence ID" value="AAN15365.1"/>
    <property type="molecule type" value="mRNA"/>
</dbReference>
<dbReference type="EMBL" id="AY088644">
    <property type="protein sequence ID" value="AAM66966.1"/>
    <property type="molecule type" value="mRNA"/>
</dbReference>
<dbReference type="RefSeq" id="NP_187123.1">
    <property type="nucleotide sequence ID" value="NM_111344.6"/>
</dbReference>
<dbReference type="SMR" id="P43082"/>
<dbReference type="BioGRID" id="4967">
    <property type="interactions" value="1"/>
</dbReference>
<dbReference type="FunCoup" id="P43082">
    <property type="interactions" value="109"/>
</dbReference>
<dbReference type="IntAct" id="P43082">
    <property type="interactions" value="1"/>
</dbReference>
<dbReference type="STRING" id="3702.P43082"/>
<dbReference type="CAZy" id="CBM18">
    <property type="family name" value="Carbohydrate-Binding Module Family 18"/>
</dbReference>
<dbReference type="GlyGen" id="P43082">
    <property type="glycosylation" value="1 site"/>
</dbReference>
<dbReference type="PaxDb" id="3702-AT3G04720.1"/>
<dbReference type="ProteomicsDB" id="230128"/>
<dbReference type="EnsemblPlants" id="AT3G04720.1">
    <property type="protein sequence ID" value="AT3G04720.1"/>
    <property type="gene ID" value="AT3G04720"/>
</dbReference>
<dbReference type="GeneID" id="819632"/>
<dbReference type="Gramene" id="AT3G04720.1">
    <property type="protein sequence ID" value="AT3G04720.1"/>
    <property type="gene ID" value="AT3G04720"/>
</dbReference>
<dbReference type="KEGG" id="ath:AT3G04720"/>
<dbReference type="Araport" id="AT3G04720"/>
<dbReference type="TAIR" id="AT3G04720">
    <property type="gene designation" value="PR4"/>
</dbReference>
<dbReference type="eggNOG" id="KOG4742">
    <property type="taxonomic scope" value="Eukaryota"/>
</dbReference>
<dbReference type="HOGENOM" id="CLU_1328439_0_0_1"/>
<dbReference type="InParanoid" id="P43082"/>
<dbReference type="OMA" id="ADKPYAW"/>
<dbReference type="OrthoDB" id="5985073at2759"/>
<dbReference type="PhylomeDB" id="P43082"/>
<dbReference type="PRO" id="PR:P43082"/>
<dbReference type="Proteomes" id="UP000006548">
    <property type="component" value="Chromosome 3"/>
</dbReference>
<dbReference type="ExpressionAtlas" id="P43082">
    <property type="expression patterns" value="baseline and differential"/>
</dbReference>
<dbReference type="GO" id="GO:0099503">
    <property type="term" value="C:secretory vesicle"/>
    <property type="evidence" value="ECO:0007005"/>
    <property type="project" value="TAIR"/>
</dbReference>
<dbReference type="GO" id="GO:0005773">
    <property type="term" value="C:vacuole"/>
    <property type="evidence" value="ECO:0007669"/>
    <property type="project" value="UniProtKB-SubCell"/>
</dbReference>
<dbReference type="GO" id="GO:0008061">
    <property type="term" value="F:chitin binding"/>
    <property type="evidence" value="ECO:0000250"/>
    <property type="project" value="TAIR"/>
</dbReference>
<dbReference type="GO" id="GO:0004540">
    <property type="term" value="F:RNA nuclease activity"/>
    <property type="evidence" value="ECO:0000314"/>
    <property type="project" value="UniProtKB"/>
</dbReference>
<dbReference type="GO" id="GO:0042742">
    <property type="term" value="P:defense response to bacterium"/>
    <property type="evidence" value="ECO:0007669"/>
    <property type="project" value="InterPro"/>
</dbReference>
<dbReference type="GO" id="GO:0050832">
    <property type="term" value="P:defense response to fungus"/>
    <property type="evidence" value="ECO:0000314"/>
    <property type="project" value="TAIR"/>
</dbReference>
<dbReference type="GO" id="GO:0031640">
    <property type="term" value="P:killing of cells of another organism"/>
    <property type="evidence" value="ECO:0007669"/>
    <property type="project" value="UniProtKB-KW"/>
</dbReference>
<dbReference type="GO" id="GO:0009723">
    <property type="term" value="P:response to ethylene"/>
    <property type="evidence" value="ECO:0000270"/>
    <property type="project" value="TAIR"/>
</dbReference>
<dbReference type="GO" id="GO:0080027">
    <property type="term" value="P:response to herbivore"/>
    <property type="evidence" value="ECO:0000270"/>
    <property type="project" value="TAIR"/>
</dbReference>
<dbReference type="GO" id="GO:0009615">
    <property type="term" value="P:response to virus"/>
    <property type="evidence" value="ECO:0000270"/>
    <property type="project" value="TAIR"/>
</dbReference>
<dbReference type="GO" id="GO:0009627">
    <property type="term" value="P:systemic acquired resistance"/>
    <property type="evidence" value="ECO:0000270"/>
    <property type="project" value="TAIR"/>
</dbReference>
<dbReference type="CDD" id="cd00035">
    <property type="entry name" value="ChtBD1"/>
    <property type="match status" value="1"/>
</dbReference>
<dbReference type="CDD" id="cd22777">
    <property type="entry name" value="DPBB_barwin-like"/>
    <property type="match status" value="1"/>
</dbReference>
<dbReference type="FunFam" id="2.40.40.10:FF:000007">
    <property type="entry name" value="Papaya barwin-like protein"/>
    <property type="match status" value="1"/>
</dbReference>
<dbReference type="Gene3D" id="3.30.60.10">
    <property type="entry name" value="Endochitinase-like"/>
    <property type="match status" value="1"/>
</dbReference>
<dbReference type="Gene3D" id="2.40.40.10">
    <property type="entry name" value="RlpA-like domain"/>
    <property type="match status" value="1"/>
</dbReference>
<dbReference type="InterPro" id="IPR018226">
    <property type="entry name" value="Barwin_CS"/>
</dbReference>
<dbReference type="InterPro" id="IPR001153">
    <property type="entry name" value="Barwin_dom"/>
</dbReference>
<dbReference type="InterPro" id="IPR001002">
    <property type="entry name" value="Chitin-bd_1"/>
</dbReference>
<dbReference type="InterPro" id="IPR018371">
    <property type="entry name" value="Chitin-binding_1_CS"/>
</dbReference>
<dbReference type="InterPro" id="IPR036861">
    <property type="entry name" value="Endochitinase-like_sf"/>
</dbReference>
<dbReference type="InterPro" id="IPR044301">
    <property type="entry name" value="PR4"/>
</dbReference>
<dbReference type="InterPro" id="IPR036908">
    <property type="entry name" value="RlpA-like_sf"/>
</dbReference>
<dbReference type="PANTHER" id="PTHR46351:SF7">
    <property type="entry name" value="HEVEIN-LIKE PREPROPROTEIN"/>
    <property type="match status" value="1"/>
</dbReference>
<dbReference type="PANTHER" id="PTHR46351">
    <property type="entry name" value="WOUND-INDUCED PROTEIN WIN2"/>
    <property type="match status" value="1"/>
</dbReference>
<dbReference type="Pfam" id="PF00967">
    <property type="entry name" value="Barwin"/>
    <property type="match status" value="1"/>
</dbReference>
<dbReference type="Pfam" id="PF00187">
    <property type="entry name" value="Chitin_bind_1"/>
    <property type="match status" value="1"/>
</dbReference>
<dbReference type="PRINTS" id="PR00602">
    <property type="entry name" value="BARWIN"/>
</dbReference>
<dbReference type="PRINTS" id="PR00451">
    <property type="entry name" value="CHITINBINDNG"/>
</dbReference>
<dbReference type="SMART" id="SM00270">
    <property type="entry name" value="ChtBD1"/>
    <property type="match status" value="1"/>
</dbReference>
<dbReference type="SUPFAM" id="SSF50685">
    <property type="entry name" value="Barwin-like endoglucanases"/>
    <property type="match status" value="1"/>
</dbReference>
<dbReference type="SUPFAM" id="SSF57016">
    <property type="entry name" value="Plant lectins/antimicrobial peptides"/>
    <property type="match status" value="1"/>
</dbReference>
<dbReference type="PROSITE" id="PS00771">
    <property type="entry name" value="BARWIN_1"/>
    <property type="match status" value="1"/>
</dbReference>
<dbReference type="PROSITE" id="PS00772">
    <property type="entry name" value="BARWIN_2"/>
    <property type="match status" value="1"/>
</dbReference>
<dbReference type="PROSITE" id="PS51174">
    <property type="entry name" value="BARWIN_3"/>
    <property type="match status" value="1"/>
</dbReference>
<dbReference type="PROSITE" id="PS00026">
    <property type="entry name" value="CHIT_BIND_I_1"/>
    <property type="match status" value="1"/>
</dbReference>
<dbReference type="PROSITE" id="PS50941">
    <property type="entry name" value="CHIT_BIND_I_2"/>
    <property type="match status" value="1"/>
</dbReference>
<keyword id="KW-0929">Antimicrobial</keyword>
<keyword id="KW-0147">Chitin-binding</keyword>
<keyword id="KW-1015">Disulfide bond</keyword>
<keyword id="KW-0295">Fungicide</keyword>
<keyword id="KW-0378">Hydrolase</keyword>
<keyword id="KW-0540">Nuclease</keyword>
<keyword id="KW-0568">Pathogenesis-related protein</keyword>
<keyword id="KW-0611">Plant defense</keyword>
<keyword id="KW-1185">Reference proteome</keyword>
<keyword id="KW-0732">Signal</keyword>
<keyword id="KW-0926">Vacuole</keyword>
<proteinExistence type="evidence at protein level"/>
<evidence type="ECO:0000255" key="1"/>
<evidence type="ECO:0000255" key="2">
    <source>
        <dbReference type="PROSITE-ProRule" id="PRU00261"/>
    </source>
</evidence>
<evidence type="ECO:0000255" key="3">
    <source>
        <dbReference type="PROSITE-ProRule" id="PRU00527"/>
    </source>
</evidence>
<evidence type="ECO:0000269" key="4">
    <source>
    </source>
</evidence>
<evidence type="ECO:0000269" key="5">
    <source>
    </source>
</evidence>
<evidence type="ECO:0000269" key="6">
    <source>
    </source>
</evidence>
<evidence type="ECO:0000305" key="7">
    <source>
    </source>
</evidence>
<comment type="function">
    <text evidence="5">Fungal growth inhibitors. Neither CB-HEL nor CD-HEL have chitinase activity, but both have antimicrobial activities. CD-HEL has RNase, but no DNase activity.</text>
</comment>
<comment type="subunit">
    <text evidence="5">CB-HEL interacts strongly with a fungal fruiting body lectin.</text>
</comment>
<comment type="subcellular location">
    <subcellularLocation>
        <location evidence="5">Vacuole</location>
    </subcellularLocation>
    <text>associated with the tonoplast.</text>
</comment>
<comment type="induction">
    <text evidence="4 6">Up-regulated by ethylene, methyl jasmonate, wounding and virus infection. Weakly induced by salicylic acid and 2,6-dichlorisonicotinic acid.</text>
</comment>
<comment type="domain">
    <text evidence="5">The C-terminal vacuolar sorting signal (VSS) (194-212) is required for vacuolar localization.</text>
</comment>